<accession>P45279</accession>
<name>ZAPG_HAEIN</name>
<gene>
    <name evidence="1" type="primary">zapG</name>
    <name type="ordered locus">HI_1628</name>
</gene>
<organism>
    <name type="scientific">Haemophilus influenzae (strain ATCC 51907 / DSM 11121 / KW20 / Rd)</name>
    <dbReference type="NCBI Taxonomy" id="71421"/>
    <lineage>
        <taxon>Bacteria</taxon>
        <taxon>Pseudomonadati</taxon>
        <taxon>Pseudomonadota</taxon>
        <taxon>Gammaproteobacteria</taxon>
        <taxon>Pasteurellales</taxon>
        <taxon>Pasteurellaceae</taxon>
        <taxon>Haemophilus</taxon>
    </lineage>
</organism>
<evidence type="ECO:0000250" key="1">
    <source>
        <dbReference type="UniProtKB" id="P0ADW3"/>
    </source>
</evidence>
<evidence type="ECO:0000255" key="2"/>
<evidence type="ECO:0000256" key="3">
    <source>
        <dbReference type="SAM" id="MobiDB-lite"/>
    </source>
</evidence>
<evidence type="ECO:0000305" key="4"/>
<dbReference type="EMBL" id="L42023">
    <property type="protein sequence ID" value="AAC23275.1"/>
    <property type="molecule type" value="Genomic_DNA"/>
</dbReference>
<dbReference type="PIR" id="D64173">
    <property type="entry name" value="D64173"/>
</dbReference>
<dbReference type="RefSeq" id="NP_439770.1">
    <property type="nucleotide sequence ID" value="NC_000907.1"/>
</dbReference>
<dbReference type="SMR" id="P45279"/>
<dbReference type="STRING" id="71421.HI_1628"/>
<dbReference type="EnsemblBacteria" id="AAC23275">
    <property type="protein sequence ID" value="AAC23275"/>
    <property type="gene ID" value="HI_1628"/>
</dbReference>
<dbReference type="KEGG" id="hin:HI_1628"/>
<dbReference type="PATRIC" id="fig|71421.8.peg.1703"/>
<dbReference type="eggNOG" id="COG3105">
    <property type="taxonomic scope" value="Bacteria"/>
</dbReference>
<dbReference type="HOGENOM" id="CLU_135606_0_0_6"/>
<dbReference type="OrthoDB" id="6401511at2"/>
<dbReference type="PhylomeDB" id="P45279"/>
<dbReference type="BioCyc" id="HINF71421:G1GJ1-1641-MONOMER"/>
<dbReference type="Proteomes" id="UP000000579">
    <property type="component" value="Chromosome"/>
</dbReference>
<dbReference type="GO" id="GO:0005886">
    <property type="term" value="C:plasma membrane"/>
    <property type="evidence" value="ECO:0000318"/>
    <property type="project" value="GO_Central"/>
</dbReference>
<dbReference type="GO" id="GO:0051301">
    <property type="term" value="P:cell division"/>
    <property type="evidence" value="ECO:0007669"/>
    <property type="project" value="UniProtKB-KW"/>
</dbReference>
<dbReference type="GO" id="GO:0008360">
    <property type="term" value="P:regulation of cell shape"/>
    <property type="evidence" value="ECO:0007669"/>
    <property type="project" value="UniProtKB-KW"/>
</dbReference>
<dbReference type="InterPro" id="IPR009386">
    <property type="entry name" value="ZapG-like"/>
</dbReference>
<dbReference type="PANTHER" id="PTHR39579">
    <property type="entry name" value="INNER MEMBRANE PROTEIN YHCB"/>
    <property type="match status" value="1"/>
</dbReference>
<dbReference type="PANTHER" id="PTHR39579:SF1">
    <property type="entry name" value="INNER MEMBRANE PROTEIN YHCB"/>
    <property type="match status" value="1"/>
</dbReference>
<dbReference type="Pfam" id="PF06295">
    <property type="entry name" value="ZapG-like"/>
    <property type="match status" value="1"/>
</dbReference>
<dbReference type="PIRSF" id="PIRSF006318">
    <property type="entry name" value="YhcB"/>
    <property type="match status" value="1"/>
</dbReference>
<keyword id="KW-0131">Cell cycle</keyword>
<keyword id="KW-0132">Cell division</keyword>
<keyword id="KW-0997">Cell inner membrane</keyword>
<keyword id="KW-1003">Cell membrane</keyword>
<keyword id="KW-0133">Cell shape</keyword>
<keyword id="KW-0472">Membrane</keyword>
<keyword id="KW-1185">Reference proteome</keyword>
<keyword id="KW-0812">Transmembrane</keyword>
<keyword id="KW-1133">Transmembrane helix</keyword>
<sequence length="134" mass="15314">MENWTNEIWVAIGIAFIVGLFIGYIIVRLTKGSVKHQAKTEAELKTVKTQLDTQKAQIEKHFAESAELFKTLINDYQKLYRHYATSSNNLLGEKDQKGLFTQQLITATDKSQNEQPRDYSEGASGLFKENKEEN</sequence>
<reference key="1">
    <citation type="journal article" date="1995" name="Science">
        <title>Whole-genome random sequencing and assembly of Haemophilus influenzae Rd.</title>
        <authorList>
            <person name="Fleischmann R.D."/>
            <person name="Adams M.D."/>
            <person name="White O."/>
            <person name="Clayton R.A."/>
            <person name="Kirkness E.F."/>
            <person name="Kerlavage A.R."/>
            <person name="Bult C.J."/>
            <person name="Tomb J.-F."/>
            <person name="Dougherty B.A."/>
            <person name="Merrick J.M."/>
            <person name="McKenney K."/>
            <person name="Sutton G.G."/>
            <person name="FitzHugh W."/>
            <person name="Fields C.A."/>
            <person name="Gocayne J.D."/>
            <person name="Scott J.D."/>
            <person name="Shirley R."/>
            <person name="Liu L.-I."/>
            <person name="Glodek A."/>
            <person name="Kelley J.M."/>
            <person name="Weidman J.F."/>
            <person name="Phillips C.A."/>
            <person name="Spriggs T."/>
            <person name="Hedblom E."/>
            <person name="Cotton M.D."/>
            <person name="Utterback T.R."/>
            <person name="Hanna M.C."/>
            <person name="Nguyen D.T."/>
            <person name="Saudek D.M."/>
            <person name="Brandon R.C."/>
            <person name="Fine L.D."/>
            <person name="Fritchman J.L."/>
            <person name="Fuhrmann J.L."/>
            <person name="Geoghagen N.S.M."/>
            <person name="Gnehm C.L."/>
            <person name="McDonald L.A."/>
            <person name="Small K.V."/>
            <person name="Fraser C.M."/>
            <person name="Smith H.O."/>
            <person name="Venter J.C."/>
        </authorList>
    </citation>
    <scope>NUCLEOTIDE SEQUENCE [LARGE SCALE GENOMIC DNA]</scope>
    <source>
        <strain>ATCC 51907 / DSM 11121 / KW20 / Rd</strain>
    </source>
</reference>
<protein>
    <recommendedName>
        <fullName evidence="1">Z-ring associated protein G</fullName>
    </recommendedName>
    <alternativeName>
        <fullName evidence="1">Cell division protein ZapG</fullName>
    </alternativeName>
</protein>
<feature type="chain" id="PRO_0000169480" description="Z-ring associated protein G">
    <location>
        <begin position="1"/>
        <end position="134"/>
    </location>
</feature>
<feature type="transmembrane region" description="Helical" evidence="2">
    <location>
        <begin position="7"/>
        <end position="27"/>
    </location>
</feature>
<feature type="region of interest" description="Disordered" evidence="3">
    <location>
        <begin position="107"/>
        <end position="134"/>
    </location>
</feature>
<feature type="compositionally biased region" description="Basic and acidic residues" evidence="3">
    <location>
        <begin position="111"/>
        <end position="120"/>
    </location>
</feature>
<comment type="function">
    <text evidence="1">Involved in cell division, cell envelope biogenesis and cell shape maintenance.</text>
</comment>
<comment type="subcellular location">
    <subcellularLocation>
        <location evidence="1">Cell inner membrane</location>
        <topology evidence="2">Single-pass membrane protein</topology>
    </subcellularLocation>
</comment>
<comment type="similarity">
    <text evidence="4">Belongs to the ZapG family.</text>
</comment>
<proteinExistence type="inferred from homology"/>